<name>PDRP_RICAH</name>
<reference key="1">
    <citation type="submission" date="2007-09" db="EMBL/GenBank/DDBJ databases">
        <title>Complete genome sequence of Rickettsia akari.</title>
        <authorList>
            <person name="Madan A."/>
            <person name="Fahey J."/>
            <person name="Helton E."/>
            <person name="Ketteman M."/>
            <person name="Madan A."/>
            <person name="Rodrigues S."/>
            <person name="Sanchez A."/>
            <person name="Whiting M."/>
            <person name="Dasch G."/>
            <person name="Eremeeva M."/>
        </authorList>
    </citation>
    <scope>NUCLEOTIDE SEQUENCE [LARGE SCALE GENOMIC DNA]</scope>
    <source>
        <strain>Hartford</strain>
    </source>
</reference>
<accession>A8GLR3</accession>
<dbReference type="EC" id="2.7.11.32" evidence="1"/>
<dbReference type="EC" id="2.7.4.27" evidence="1"/>
<dbReference type="EMBL" id="CP000847">
    <property type="protein sequence ID" value="ABV74338.1"/>
    <property type="molecule type" value="Genomic_DNA"/>
</dbReference>
<dbReference type="RefSeq" id="WP_012013208.1">
    <property type="nucleotide sequence ID" value="NC_009881.1"/>
</dbReference>
<dbReference type="SMR" id="A8GLR3"/>
<dbReference type="STRING" id="293614.A1C_00005"/>
<dbReference type="KEGG" id="rak:A1C_00005"/>
<dbReference type="eggNOG" id="COG1806">
    <property type="taxonomic scope" value="Bacteria"/>
</dbReference>
<dbReference type="HOGENOM" id="CLU_046206_2_0_5"/>
<dbReference type="Proteomes" id="UP000006830">
    <property type="component" value="Chromosome"/>
</dbReference>
<dbReference type="GO" id="GO:0043531">
    <property type="term" value="F:ADP binding"/>
    <property type="evidence" value="ECO:0007669"/>
    <property type="project" value="UniProtKB-UniRule"/>
</dbReference>
<dbReference type="GO" id="GO:0005524">
    <property type="term" value="F:ATP binding"/>
    <property type="evidence" value="ECO:0007669"/>
    <property type="project" value="InterPro"/>
</dbReference>
<dbReference type="GO" id="GO:0016776">
    <property type="term" value="F:phosphotransferase activity, phosphate group as acceptor"/>
    <property type="evidence" value="ECO:0007669"/>
    <property type="project" value="UniProtKB-UniRule"/>
</dbReference>
<dbReference type="GO" id="GO:0004674">
    <property type="term" value="F:protein serine/threonine kinase activity"/>
    <property type="evidence" value="ECO:0007669"/>
    <property type="project" value="UniProtKB-UniRule"/>
</dbReference>
<dbReference type="HAMAP" id="MF_00921">
    <property type="entry name" value="PDRP"/>
    <property type="match status" value="1"/>
</dbReference>
<dbReference type="InterPro" id="IPR005177">
    <property type="entry name" value="Kinase-pyrophosphorylase"/>
</dbReference>
<dbReference type="InterPro" id="IPR026565">
    <property type="entry name" value="PPDK_reg"/>
</dbReference>
<dbReference type="NCBIfam" id="NF003742">
    <property type="entry name" value="PRK05339.1"/>
    <property type="match status" value="1"/>
</dbReference>
<dbReference type="PANTHER" id="PTHR31756">
    <property type="entry name" value="PYRUVATE, PHOSPHATE DIKINASE REGULATORY PROTEIN 1, CHLOROPLASTIC"/>
    <property type="match status" value="1"/>
</dbReference>
<dbReference type="PANTHER" id="PTHR31756:SF3">
    <property type="entry name" value="PYRUVATE, PHOSPHATE DIKINASE REGULATORY PROTEIN 1, CHLOROPLASTIC"/>
    <property type="match status" value="1"/>
</dbReference>
<dbReference type="Pfam" id="PF03618">
    <property type="entry name" value="Kinase-PPPase"/>
    <property type="match status" value="1"/>
</dbReference>
<comment type="function">
    <text evidence="1">Bifunctional serine/threonine kinase and phosphorylase involved in the regulation of the pyruvate, phosphate dikinase (PPDK) by catalyzing its phosphorylation/dephosphorylation.</text>
</comment>
<comment type="catalytic activity">
    <reaction evidence="1">
        <text>N(tele)-phospho-L-histidyl/L-threonyl-[pyruvate, phosphate dikinase] + ADP = N(tele)-phospho-L-histidyl/O-phospho-L-threonyl-[pyruvate, phosphate dikinase] + AMP + H(+)</text>
        <dbReference type="Rhea" id="RHEA:43692"/>
        <dbReference type="Rhea" id="RHEA-COMP:10650"/>
        <dbReference type="Rhea" id="RHEA-COMP:10651"/>
        <dbReference type="ChEBI" id="CHEBI:15378"/>
        <dbReference type="ChEBI" id="CHEBI:30013"/>
        <dbReference type="ChEBI" id="CHEBI:61977"/>
        <dbReference type="ChEBI" id="CHEBI:83586"/>
        <dbReference type="ChEBI" id="CHEBI:456215"/>
        <dbReference type="ChEBI" id="CHEBI:456216"/>
        <dbReference type="EC" id="2.7.11.32"/>
    </reaction>
</comment>
<comment type="catalytic activity">
    <reaction evidence="1">
        <text>N(tele)-phospho-L-histidyl/O-phospho-L-threonyl-[pyruvate, phosphate dikinase] + phosphate + H(+) = N(tele)-phospho-L-histidyl/L-threonyl-[pyruvate, phosphate dikinase] + diphosphate</text>
        <dbReference type="Rhea" id="RHEA:43696"/>
        <dbReference type="Rhea" id="RHEA-COMP:10650"/>
        <dbReference type="Rhea" id="RHEA-COMP:10651"/>
        <dbReference type="ChEBI" id="CHEBI:15378"/>
        <dbReference type="ChEBI" id="CHEBI:30013"/>
        <dbReference type="ChEBI" id="CHEBI:33019"/>
        <dbReference type="ChEBI" id="CHEBI:43474"/>
        <dbReference type="ChEBI" id="CHEBI:61977"/>
        <dbReference type="ChEBI" id="CHEBI:83586"/>
        <dbReference type="EC" id="2.7.4.27"/>
    </reaction>
</comment>
<comment type="similarity">
    <text evidence="1">Belongs to the pyruvate, phosphate/water dikinase regulatory protein family. PDRP subfamily.</text>
</comment>
<gene>
    <name type="ordered locus">A1C_00005</name>
</gene>
<proteinExistence type="inferred from homology"/>
<sequence>MTKLIIHLVSDSSVQTAKYAANSALAQFTSVKPKLYHWPMIRNLELLNEVLSKIESKHGIVLYTIADQELRKALTKFCYELKIPCISVIGKIIKEMSVFSCIEIEKEQNYNYKFDKTYFDTLNAIDYAIRHDDGQMLNELSEADIILIGPSRTSKTPTSVFLAYNGLKAANIPYVYNCPSPDFIEKDIDQLVVGLVINPNRLIEIREARLNLLQINDNKSYTDFNIVQKECLEVRKICDQKNWPVIDVSTRSIEETAALIMRIYYNRKNKYNK</sequence>
<organism>
    <name type="scientific">Rickettsia akari (strain Hartford)</name>
    <dbReference type="NCBI Taxonomy" id="293614"/>
    <lineage>
        <taxon>Bacteria</taxon>
        <taxon>Pseudomonadati</taxon>
        <taxon>Pseudomonadota</taxon>
        <taxon>Alphaproteobacteria</taxon>
        <taxon>Rickettsiales</taxon>
        <taxon>Rickettsiaceae</taxon>
        <taxon>Rickettsieae</taxon>
        <taxon>Rickettsia</taxon>
        <taxon>spotted fever group</taxon>
    </lineage>
</organism>
<evidence type="ECO:0000255" key="1">
    <source>
        <dbReference type="HAMAP-Rule" id="MF_00921"/>
    </source>
</evidence>
<protein>
    <recommendedName>
        <fullName evidence="1">Putative pyruvate, phosphate dikinase regulatory protein</fullName>
        <shortName evidence="1">PPDK regulatory protein</shortName>
        <ecNumber evidence="1">2.7.11.32</ecNumber>
        <ecNumber evidence="1">2.7.4.27</ecNumber>
    </recommendedName>
</protein>
<feature type="chain" id="PRO_1000073007" description="Putative pyruvate, phosphate dikinase regulatory protein">
    <location>
        <begin position="1"/>
        <end position="273"/>
    </location>
</feature>
<feature type="binding site" evidence="1">
    <location>
        <begin position="149"/>
        <end position="156"/>
    </location>
    <ligand>
        <name>ADP</name>
        <dbReference type="ChEBI" id="CHEBI:456216"/>
    </ligand>
</feature>
<keyword id="KW-0418">Kinase</keyword>
<keyword id="KW-0547">Nucleotide-binding</keyword>
<keyword id="KW-0723">Serine/threonine-protein kinase</keyword>
<keyword id="KW-0808">Transferase</keyword>